<keyword id="KW-0050">Antiport</keyword>
<keyword id="KW-0997">Cell inner membrane</keyword>
<keyword id="KW-1003">Cell membrane</keyword>
<keyword id="KW-0472">Membrane</keyword>
<keyword id="KW-1185">Reference proteome</keyword>
<keyword id="KW-0812">Transmembrane</keyword>
<keyword id="KW-1133">Transmembrane helix</keyword>
<keyword id="KW-0813">Transport</keyword>
<sequence>MKPSTEWWRYLAPLAVIAIIALLPLPAGLESHTWLYFAVFTGVIVGLILEPVPGAVVAMVGISIIAILSPWLLFSPEQLAQPGFKFTAKSLSWAVSGFSNSVIWLIFAAFMFGTGYEKTGLGRRIALILVKKMGHRTLFLGYAVMFSELILAPVTPSNSARGAGIIYPIIRNLPPLYQSQPNDSSSRSIGSYIMWMGIVADCVTSAIFLTAMAPNLLLIGLMKSASNATLSWGDWFLGMLPLSILLVLLVPWLAYVLYPPILKSGDQVPRWAETELQAMGPLCSREKRMLGLMVGALVLWIFGGDYIDAAMVGYSVVALMLLLRIICWDDIVSNKAAWNVFFWLASLITLATGLNNTGFISWFGKLLAGSLSGYSPTIVMVALIVVFYLLRYFFASATAYTSALAPMMIAAALAMPEIPLPVFCLMVGAAIGLGSILTPYATGPSPIYYGSGYLPTVDYWRLGAIFGLIFLVLLVITGLLWMPMVLL</sequence>
<accession>Q8FDG7</accession>
<proteinExistence type="inferred from homology"/>
<dbReference type="EMBL" id="AE014075">
    <property type="protein sequence ID" value="AAN82259.1"/>
    <property type="molecule type" value="Genomic_DNA"/>
</dbReference>
<dbReference type="RefSeq" id="WP_000804955.1">
    <property type="nucleotide sequence ID" value="NZ_CP051263.1"/>
</dbReference>
<dbReference type="SMR" id="Q8FDG7"/>
<dbReference type="STRING" id="199310.c3814"/>
<dbReference type="KEGG" id="ecc:c3814"/>
<dbReference type="eggNOG" id="COG0471">
    <property type="taxonomic scope" value="Bacteria"/>
</dbReference>
<dbReference type="HOGENOM" id="CLU_005170_7_0_6"/>
<dbReference type="BioCyc" id="ECOL199310:C3814-MONOMER"/>
<dbReference type="Proteomes" id="UP000001410">
    <property type="component" value="Chromosome"/>
</dbReference>
<dbReference type="GO" id="GO:0005886">
    <property type="term" value="C:plasma membrane"/>
    <property type="evidence" value="ECO:0007669"/>
    <property type="project" value="UniProtKB-SubCell"/>
</dbReference>
<dbReference type="GO" id="GO:0015297">
    <property type="term" value="F:antiporter activity"/>
    <property type="evidence" value="ECO:0007669"/>
    <property type="project" value="UniProtKB-KW"/>
</dbReference>
<dbReference type="InterPro" id="IPR030676">
    <property type="entry name" value="CitT-rel"/>
</dbReference>
<dbReference type="InterPro" id="IPR001898">
    <property type="entry name" value="SLC13A/DASS"/>
</dbReference>
<dbReference type="NCBIfam" id="TIGR00785">
    <property type="entry name" value="dass"/>
    <property type="match status" value="1"/>
</dbReference>
<dbReference type="PANTHER" id="PTHR42826">
    <property type="entry name" value="DICARBOXYLATE TRANSPORTER 2.1, CHLOROPLASTIC"/>
    <property type="match status" value="1"/>
</dbReference>
<dbReference type="Pfam" id="PF00939">
    <property type="entry name" value="Na_sulph_symp"/>
    <property type="match status" value="1"/>
</dbReference>
<dbReference type="PIRSF" id="PIRSF002457">
    <property type="entry name" value="DASS"/>
    <property type="match status" value="1"/>
</dbReference>
<organism>
    <name type="scientific">Escherichia coli O6:H1 (strain CFT073 / ATCC 700928 / UPEC)</name>
    <dbReference type="NCBI Taxonomy" id="199310"/>
    <lineage>
        <taxon>Bacteria</taxon>
        <taxon>Pseudomonadati</taxon>
        <taxon>Pseudomonadota</taxon>
        <taxon>Gammaproteobacteria</taxon>
        <taxon>Enterobacterales</taxon>
        <taxon>Enterobacteriaceae</taxon>
        <taxon>Escherichia</taxon>
    </lineage>
</organism>
<gene>
    <name type="primary">ttdT</name>
    <name type="ordered locus">c3814</name>
</gene>
<name>TTDT_ECOL6</name>
<protein>
    <recommendedName>
        <fullName evidence="1">L-tartrate/succinate antiporter</fullName>
    </recommendedName>
    <alternativeName>
        <fullName>Tartrate carrier</fullName>
    </alternativeName>
    <alternativeName>
        <fullName>Tartrate transporter</fullName>
    </alternativeName>
</protein>
<reference key="1">
    <citation type="journal article" date="2002" name="Proc. Natl. Acad. Sci. U.S.A.">
        <title>Extensive mosaic structure revealed by the complete genome sequence of uropathogenic Escherichia coli.</title>
        <authorList>
            <person name="Welch R.A."/>
            <person name="Burland V."/>
            <person name="Plunkett G. III"/>
            <person name="Redford P."/>
            <person name="Roesch P."/>
            <person name="Rasko D."/>
            <person name="Buckles E.L."/>
            <person name="Liou S.-R."/>
            <person name="Boutin A."/>
            <person name="Hackett J."/>
            <person name="Stroud D."/>
            <person name="Mayhew G.F."/>
            <person name="Rose D.J."/>
            <person name="Zhou S."/>
            <person name="Schwartz D.C."/>
            <person name="Perna N.T."/>
            <person name="Mobley H.L.T."/>
            <person name="Donnenberg M.S."/>
            <person name="Blattner F.R."/>
        </authorList>
    </citation>
    <scope>NUCLEOTIDE SEQUENCE [LARGE SCALE GENOMIC DNA]</scope>
    <source>
        <strain>CFT073 / ATCC 700928 / UPEC</strain>
    </source>
</reference>
<comment type="function">
    <text evidence="1">Catalyzes the uptake of tartrate in exchange for intracellular succinate. Essential for anaerobic L-tartrate fermentation.</text>
</comment>
<comment type="catalytic activity">
    <reaction evidence="1">
        <text>(2R,3R)-tartrate(out) + succinate(in) = (2R,3R)-tartrate(in) + succinate(out)</text>
        <dbReference type="Rhea" id="RHEA:29259"/>
        <dbReference type="ChEBI" id="CHEBI:30031"/>
        <dbReference type="ChEBI" id="CHEBI:30924"/>
    </reaction>
    <physiologicalReaction direction="left-to-right" evidence="1">
        <dbReference type="Rhea" id="RHEA:29260"/>
    </physiologicalReaction>
</comment>
<comment type="subcellular location">
    <subcellularLocation>
        <location evidence="1">Cell inner membrane</location>
        <topology evidence="2">Multi-pass membrane protein</topology>
    </subcellularLocation>
</comment>
<comment type="similarity">
    <text evidence="3">Belongs to the SLC13A/DASS transporter (TC 2.A.47) family. DIT1 subfamily.</text>
</comment>
<evidence type="ECO:0000250" key="1">
    <source>
        <dbReference type="UniProtKB" id="P39414"/>
    </source>
</evidence>
<evidence type="ECO:0000255" key="2"/>
<evidence type="ECO:0000305" key="3"/>
<feature type="chain" id="PRO_0000262713" description="L-tartrate/succinate antiporter">
    <location>
        <begin position="1"/>
        <end position="487"/>
    </location>
</feature>
<feature type="transmembrane region" description="Helical" evidence="2">
    <location>
        <begin position="10"/>
        <end position="30"/>
    </location>
</feature>
<feature type="transmembrane region" description="Helical" evidence="2">
    <location>
        <begin position="33"/>
        <end position="53"/>
    </location>
</feature>
<feature type="transmembrane region" description="Helical" evidence="2">
    <location>
        <begin position="54"/>
        <end position="74"/>
    </location>
</feature>
<feature type="transmembrane region" description="Helical" evidence="2">
    <location>
        <begin position="93"/>
        <end position="113"/>
    </location>
</feature>
<feature type="transmembrane region" description="Helical" evidence="2">
    <location>
        <begin position="137"/>
        <end position="157"/>
    </location>
</feature>
<feature type="transmembrane region" description="Helical" evidence="2">
    <location>
        <begin position="189"/>
        <end position="209"/>
    </location>
</feature>
<feature type="transmembrane region" description="Helical" evidence="2">
    <location>
        <begin position="236"/>
        <end position="256"/>
    </location>
</feature>
<feature type="transmembrane region" description="Helical" evidence="2">
    <location>
        <begin position="292"/>
        <end position="312"/>
    </location>
</feature>
<feature type="transmembrane region" description="Helical" evidence="2">
    <location>
        <begin position="313"/>
        <end position="333"/>
    </location>
</feature>
<feature type="transmembrane region" description="Helical" evidence="2">
    <location>
        <begin position="340"/>
        <end position="360"/>
    </location>
</feature>
<feature type="transmembrane region" description="Helical" evidence="2">
    <location>
        <begin position="370"/>
        <end position="390"/>
    </location>
</feature>
<feature type="transmembrane region" description="Helical" evidence="2">
    <location>
        <begin position="393"/>
        <end position="413"/>
    </location>
</feature>
<feature type="transmembrane region" description="Helical" evidence="2">
    <location>
        <begin position="418"/>
        <end position="438"/>
    </location>
</feature>
<feature type="transmembrane region" description="Helical" evidence="2">
    <location>
        <begin position="462"/>
        <end position="482"/>
    </location>
</feature>